<gene>
    <name evidence="1" type="primary">cyaY</name>
    <name type="ordered locus">AHA_0472</name>
</gene>
<keyword id="KW-0408">Iron</keyword>
<keyword id="KW-0479">Metal-binding</keyword>
<keyword id="KW-1185">Reference proteome</keyword>
<protein>
    <recommendedName>
        <fullName evidence="1">Iron-sulfur cluster assembly protein CyaY</fullName>
    </recommendedName>
</protein>
<dbReference type="EMBL" id="CP000462">
    <property type="protein sequence ID" value="ABK39479.1"/>
    <property type="molecule type" value="Genomic_DNA"/>
</dbReference>
<dbReference type="RefSeq" id="WP_011704445.1">
    <property type="nucleotide sequence ID" value="NC_008570.1"/>
</dbReference>
<dbReference type="RefSeq" id="YP_855005.1">
    <property type="nucleotide sequence ID" value="NC_008570.1"/>
</dbReference>
<dbReference type="SMR" id="A0KFH9"/>
<dbReference type="STRING" id="380703.AHA_0472"/>
<dbReference type="EnsemblBacteria" id="ABK39479">
    <property type="protein sequence ID" value="ABK39479"/>
    <property type="gene ID" value="AHA_0472"/>
</dbReference>
<dbReference type="GeneID" id="4488890"/>
<dbReference type="KEGG" id="aha:AHA_0472"/>
<dbReference type="PATRIC" id="fig|380703.7.peg.464"/>
<dbReference type="eggNOG" id="COG1965">
    <property type="taxonomic scope" value="Bacteria"/>
</dbReference>
<dbReference type="HOGENOM" id="CLU_080880_3_0_6"/>
<dbReference type="OrthoDB" id="285675at2"/>
<dbReference type="Proteomes" id="UP000000756">
    <property type="component" value="Chromosome"/>
</dbReference>
<dbReference type="GO" id="GO:0005829">
    <property type="term" value="C:cytosol"/>
    <property type="evidence" value="ECO:0007669"/>
    <property type="project" value="TreeGrafter"/>
</dbReference>
<dbReference type="GO" id="GO:0008199">
    <property type="term" value="F:ferric iron binding"/>
    <property type="evidence" value="ECO:0007669"/>
    <property type="project" value="InterPro"/>
</dbReference>
<dbReference type="GO" id="GO:0008198">
    <property type="term" value="F:ferrous iron binding"/>
    <property type="evidence" value="ECO:0007669"/>
    <property type="project" value="TreeGrafter"/>
</dbReference>
<dbReference type="GO" id="GO:0016226">
    <property type="term" value="P:iron-sulfur cluster assembly"/>
    <property type="evidence" value="ECO:0007669"/>
    <property type="project" value="UniProtKB-UniRule"/>
</dbReference>
<dbReference type="CDD" id="cd00503">
    <property type="entry name" value="Frataxin"/>
    <property type="match status" value="1"/>
</dbReference>
<dbReference type="Gene3D" id="3.30.920.10">
    <property type="entry name" value="Frataxin/CyaY"/>
    <property type="match status" value="1"/>
</dbReference>
<dbReference type="HAMAP" id="MF_00142">
    <property type="entry name" value="CyaY"/>
    <property type="match status" value="1"/>
</dbReference>
<dbReference type="InterPro" id="IPR047584">
    <property type="entry name" value="CyaY"/>
</dbReference>
<dbReference type="InterPro" id="IPR002908">
    <property type="entry name" value="Frataxin/CyaY"/>
</dbReference>
<dbReference type="InterPro" id="IPR036524">
    <property type="entry name" value="Frataxin/CyaY_sf"/>
</dbReference>
<dbReference type="InterPro" id="IPR020895">
    <property type="entry name" value="Frataxin_CS"/>
</dbReference>
<dbReference type="NCBIfam" id="TIGR03421">
    <property type="entry name" value="FeS_CyaY"/>
    <property type="match status" value="1"/>
</dbReference>
<dbReference type="PANTHER" id="PTHR16821">
    <property type="entry name" value="FRATAXIN"/>
    <property type="match status" value="1"/>
</dbReference>
<dbReference type="PANTHER" id="PTHR16821:SF2">
    <property type="entry name" value="FRATAXIN, MITOCHONDRIAL"/>
    <property type="match status" value="1"/>
</dbReference>
<dbReference type="Pfam" id="PF01491">
    <property type="entry name" value="Frataxin_Cyay"/>
    <property type="match status" value="1"/>
</dbReference>
<dbReference type="SMART" id="SM01219">
    <property type="entry name" value="Frataxin_Cyay"/>
    <property type="match status" value="1"/>
</dbReference>
<dbReference type="SUPFAM" id="SSF55387">
    <property type="entry name" value="Frataxin/Nqo15-like"/>
    <property type="match status" value="1"/>
</dbReference>
<dbReference type="PROSITE" id="PS01344">
    <property type="entry name" value="FRATAXIN_1"/>
    <property type="match status" value="1"/>
</dbReference>
<dbReference type="PROSITE" id="PS50810">
    <property type="entry name" value="FRATAXIN_2"/>
    <property type="match status" value="1"/>
</dbReference>
<evidence type="ECO:0000255" key="1">
    <source>
        <dbReference type="HAMAP-Rule" id="MF_00142"/>
    </source>
</evidence>
<organism>
    <name type="scientific">Aeromonas hydrophila subsp. hydrophila (strain ATCC 7966 / DSM 30187 / BCRC 13018 / CCUG 14551 / JCM 1027 / KCTC 2358 / NCIMB 9240 / NCTC 8049)</name>
    <dbReference type="NCBI Taxonomy" id="380703"/>
    <lineage>
        <taxon>Bacteria</taxon>
        <taxon>Pseudomonadati</taxon>
        <taxon>Pseudomonadota</taxon>
        <taxon>Gammaproteobacteria</taxon>
        <taxon>Aeromonadales</taxon>
        <taxon>Aeromonadaceae</taxon>
        <taxon>Aeromonas</taxon>
    </lineage>
</organism>
<name>CYAY_AERHH</name>
<comment type="function">
    <text evidence="1">Involved in iron-sulfur (Fe-S) cluster assembly. May act as a regulator of Fe-S biogenesis.</text>
</comment>
<comment type="similarity">
    <text evidence="1">Belongs to the frataxin family.</text>
</comment>
<feature type="chain" id="PRO_1000010909" description="Iron-sulfur cluster assembly protein CyaY">
    <location>
        <begin position="1"/>
        <end position="104"/>
    </location>
</feature>
<accession>A0KFH9</accession>
<sequence>MKDHEYHALTDAFFQYVEDTVDAGYPDIDCERAGGVLTLSFENKTKVIINKQEPLHQIWVATRENGFHFELQGESWIDNRFGHELKTLLSKACTTQAGEPVQFP</sequence>
<proteinExistence type="inferred from homology"/>
<reference key="1">
    <citation type="journal article" date="2006" name="J. Bacteriol.">
        <title>Genome sequence of Aeromonas hydrophila ATCC 7966T: jack of all trades.</title>
        <authorList>
            <person name="Seshadri R."/>
            <person name="Joseph S.W."/>
            <person name="Chopra A.K."/>
            <person name="Sha J."/>
            <person name="Shaw J."/>
            <person name="Graf J."/>
            <person name="Haft D.H."/>
            <person name="Wu M."/>
            <person name="Ren Q."/>
            <person name="Rosovitz M.J."/>
            <person name="Madupu R."/>
            <person name="Tallon L."/>
            <person name="Kim M."/>
            <person name="Jin S."/>
            <person name="Vuong H."/>
            <person name="Stine O.C."/>
            <person name="Ali A."/>
            <person name="Horneman A.J."/>
            <person name="Heidelberg J.F."/>
        </authorList>
    </citation>
    <scope>NUCLEOTIDE SEQUENCE [LARGE SCALE GENOMIC DNA]</scope>
    <source>
        <strain>ATCC 7966 / DSM 30187 / BCRC 13018 / CCUG 14551 / JCM 1027 / KCTC 2358 / NCIMB 9240 / NCTC 8049</strain>
    </source>
</reference>